<sequence length="100" mass="11454">MTPWYLYLIRTADNALYTGITTDVARRYRQHQTGKGAKALRGKGELTLAFAAQVGDRSLALRIEYRIKQLTKRQKERLVTEREAFEALLSSLQTPVLKND</sequence>
<organism>
    <name type="scientific">Salmonella paratyphi A (strain ATCC 9150 / SARB42)</name>
    <dbReference type="NCBI Taxonomy" id="295319"/>
    <lineage>
        <taxon>Bacteria</taxon>
        <taxon>Pseudomonadati</taxon>
        <taxon>Pseudomonadota</taxon>
        <taxon>Gammaproteobacteria</taxon>
        <taxon>Enterobacterales</taxon>
        <taxon>Enterobacteriaceae</taxon>
        <taxon>Salmonella</taxon>
    </lineage>
</organism>
<gene>
    <name evidence="1" type="primary">yhbQ</name>
    <name type="ordered locus">SPA3140</name>
</gene>
<feature type="chain" id="PRO_0000328912" description="UPF0213 protein YhbQ">
    <location>
        <begin position="1"/>
        <end position="100"/>
    </location>
</feature>
<feature type="domain" description="GIY-YIG" evidence="1">
    <location>
        <begin position="2"/>
        <end position="77"/>
    </location>
</feature>
<reference key="1">
    <citation type="journal article" date="2004" name="Nat. Genet.">
        <title>Comparison of genome degradation in Paratyphi A and Typhi, human-restricted serovars of Salmonella enterica that cause typhoid.</title>
        <authorList>
            <person name="McClelland M."/>
            <person name="Sanderson K.E."/>
            <person name="Clifton S.W."/>
            <person name="Latreille P."/>
            <person name="Porwollik S."/>
            <person name="Sabo A."/>
            <person name="Meyer R."/>
            <person name="Bieri T."/>
            <person name="Ozersky P."/>
            <person name="McLellan M."/>
            <person name="Harkins C.R."/>
            <person name="Wang C."/>
            <person name="Nguyen C."/>
            <person name="Berghoff A."/>
            <person name="Elliott G."/>
            <person name="Kohlberg S."/>
            <person name="Strong C."/>
            <person name="Du F."/>
            <person name="Carter J."/>
            <person name="Kremizki C."/>
            <person name="Layman D."/>
            <person name="Leonard S."/>
            <person name="Sun H."/>
            <person name="Fulton L."/>
            <person name="Nash W."/>
            <person name="Miner T."/>
            <person name="Minx P."/>
            <person name="Delehaunty K."/>
            <person name="Fronick C."/>
            <person name="Magrini V."/>
            <person name="Nhan M."/>
            <person name="Warren W."/>
            <person name="Florea L."/>
            <person name="Spieth J."/>
            <person name="Wilson R.K."/>
        </authorList>
    </citation>
    <scope>NUCLEOTIDE SEQUENCE [LARGE SCALE GENOMIC DNA]</scope>
    <source>
        <strain>ATCC 9150 / SARB42</strain>
    </source>
</reference>
<evidence type="ECO:0000255" key="1">
    <source>
        <dbReference type="HAMAP-Rule" id="MF_01029"/>
    </source>
</evidence>
<evidence type="ECO:0000305" key="2"/>
<comment type="similarity">
    <text evidence="1">Belongs to the UPF0213 family.</text>
</comment>
<comment type="sequence caution" evidence="2">
    <conflict type="erroneous initiation">
        <sequence resource="EMBL-CDS" id="AAV78969"/>
    </conflict>
</comment>
<accession>Q5PLA5</accession>
<dbReference type="EMBL" id="CP000026">
    <property type="protein sequence ID" value="AAV78969.1"/>
    <property type="status" value="ALT_INIT"/>
    <property type="molecule type" value="Genomic_DNA"/>
</dbReference>
<dbReference type="SMR" id="Q5PLA5"/>
<dbReference type="KEGG" id="spt:SPA3140"/>
<dbReference type="HOGENOM" id="CLU_135650_0_1_6"/>
<dbReference type="Proteomes" id="UP000008185">
    <property type="component" value="Chromosome"/>
</dbReference>
<dbReference type="CDD" id="cd10456">
    <property type="entry name" value="GIY-YIG_UPF0213"/>
    <property type="match status" value="1"/>
</dbReference>
<dbReference type="Gene3D" id="3.40.1440.10">
    <property type="entry name" value="GIY-YIG endonuclease"/>
    <property type="match status" value="1"/>
</dbReference>
<dbReference type="HAMAP" id="MF_01029">
    <property type="entry name" value="UPF0213"/>
    <property type="match status" value="1"/>
</dbReference>
<dbReference type="InterPro" id="IPR000305">
    <property type="entry name" value="GIY-YIG_endonuc"/>
</dbReference>
<dbReference type="InterPro" id="IPR035901">
    <property type="entry name" value="GIY-YIG_endonuc_sf"/>
</dbReference>
<dbReference type="InterPro" id="IPR050190">
    <property type="entry name" value="UPF0213_domain"/>
</dbReference>
<dbReference type="InterPro" id="IPR022992">
    <property type="entry name" value="UPF0213_GIY-YIG_endonuc"/>
</dbReference>
<dbReference type="PANTHER" id="PTHR34477">
    <property type="entry name" value="UPF0213 PROTEIN YHBQ"/>
    <property type="match status" value="1"/>
</dbReference>
<dbReference type="PANTHER" id="PTHR34477:SF1">
    <property type="entry name" value="UPF0213 PROTEIN YHBQ"/>
    <property type="match status" value="1"/>
</dbReference>
<dbReference type="Pfam" id="PF01541">
    <property type="entry name" value="GIY-YIG"/>
    <property type="match status" value="1"/>
</dbReference>
<dbReference type="SMART" id="SM00465">
    <property type="entry name" value="GIYc"/>
    <property type="match status" value="1"/>
</dbReference>
<dbReference type="SUPFAM" id="SSF82771">
    <property type="entry name" value="GIY-YIG endonuclease"/>
    <property type="match status" value="1"/>
</dbReference>
<dbReference type="PROSITE" id="PS50164">
    <property type="entry name" value="GIY_YIG"/>
    <property type="match status" value="1"/>
</dbReference>
<proteinExistence type="inferred from homology"/>
<name>YHBQ_SALPA</name>
<protein>
    <recommendedName>
        <fullName evidence="1">UPF0213 protein YhbQ</fullName>
    </recommendedName>
</protein>